<evidence type="ECO:0000255" key="1">
    <source>
        <dbReference type="HAMAP-Rule" id="MF_01042"/>
    </source>
</evidence>
<sequence>MSKKNPNLEDELSLFQDAVKGVKKFTHDTIITRRQQNSKVDKAKVSSKETQNHEFYFSDEFEPHLNEHGPTQYARTGVSKYEVKKLRRGIYVPDMYLDMHGMTQQEAKRELAAMLAACIKESVSCACVMHGIGKHILKKKAPLWLAQHPDVMAFHQAPLEFGGNGALLVLIDIPER</sequence>
<feature type="chain" id="PRO_0000214558" description="Ribosome rescue factor SmrB">
    <location>
        <begin position="1"/>
        <end position="176"/>
    </location>
</feature>
<feature type="domain" description="Smr" evidence="1">
    <location>
        <begin position="97"/>
        <end position="172"/>
    </location>
</feature>
<proteinExistence type="inferred from homology"/>
<dbReference type="EC" id="3.1.-.-" evidence="1"/>
<dbReference type="EMBL" id="CR378666">
    <property type="protein sequence ID" value="CAG19377.1"/>
    <property type="molecule type" value="Genomic_DNA"/>
</dbReference>
<dbReference type="RefSeq" id="WP_011217711.1">
    <property type="nucleotide sequence ID" value="NC_006370.1"/>
</dbReference>
<dbReference type="SMR" id="P62430"/>
<dbReference type="STRING" id="298386.PBPRA0966"/>
<dbReference type="KEGG" id="ppr:PBPRA0966"/>
<dbReference type="eggNOG" id="COG2840">
    <property type="taxonomic scope" value="Bacteria"/>
</dbReference>
<dbReference type="HOGENOM" id="CLU_055978_4_0_6"/>
<dbReference type="Proteomes" id="UP000000593">
    <property type="component" value="Chromosome 1"/>
</dbReference>
<dbReference type="GO" id="GO:0004521">
    <property type="term" value="F:RNA endonuclease activity"/>
    <property type="evidence" value="ECO:0007669"/>
    <property type="project" value="UniProtKB-UniRule"/>
</dbReference>
<dbReference type="GO" id="GO:0019843">
    <property type="term" value="F:rRNA binding"/>
    <property type="evidence" value="ECO:0007669"/>
    <property type="project" value="UniProtKB-UniRule"/>
</dbReference>
<dbReference type="GO" id="GO:0072344">
    <property type="term" value="P:rescue of stalled ribosome"/>
    <property type="evidence" value="ECO:0007669"/>
    <property type="project" value="UniProtKB-UniRule"/>
</dbReference>
<dbReference type="Gene3D" id="3.30.1370.110">
    <property type="match status" value="1"/>
</dbReference>
<dbReference type="HAMAP" id="MF_01042">
    <property type="entry name" value="SmrB"/>
    <property type="match status" value="1"/>
</dbReference>
<dbReference type="InterPro" id="IPR002625">
    <property type="entry name" value="Smr_dom"/>
</dbReference>
<dbReference type="InterPro" id="IPR036063">
    <property type="entry name" value="Smr_dom_sf"/>
</dbReference>
<dbReference type="InterPro" id="IPR022990">
    <property type="entry name" value="SmrB-like"/>
</dbReference>
<dbReference type="NCBIfam" id="NF003432">
    <property type="entry name" value="PRK04946.1"/>
    <property type="match status" value="1"/>
</dbReference>
<dbReference type="PANTHER" id="PTHR35562">
    <property type="entry name" value="DNA ENDONUCLEASE SMRA-RELATED"/>
    <property type="match status" value="1"/>
</dbReference>
<dbReference type="PANTHER" id="PTHR35562:SF1">
    <property type="entry name" value="UPF0115 PROTEIN YFCN"/>
    <property type="match status" value="1"/>
</dbReference>
<dbReference type="Pfam" id="PF01713">
    <property type="entry name" value="Smr"/>
    <property type="match status" value="1"/>
</dbReference>
<dbReference type="SMART" id="SM00463">
    <property type="entry name" value="SMR"/>
    <property type="match status" value="1"/>
</dbReference>
<dbReference type="SUPFAM" id="SSF160443">
    <property type="entry name" value="SMR domain-like"/>
    <property type="match status" value="1"/>
</dbReference>
<dbReference type="PROSITE" id="PS50828">
    <property type="entry name" value="SMR"/>
    <property type="match status" value="1"/>
</dbReference>
<reference key="1">
    <citation type="journal article" date="2005" name="Science">
        <title>Life at depth: Photobacterium profundum genome sequence and expression analysis.</title>
        <authorList>
            <person name="Vezzi A."/>
            <person name="Campanaro S."/>
            <person name="D'Angelo M."/>
            <person name="Simonato F."/>
            <person name="Vitulo N."/>
            <person name="Lauro F.M."/>
            <person name="Cestaro A."/>
            <person name="Malacrida G."/>
            <person name="Simionati B."/>
            <person name="Cannata N."/>
            <person name="Romualdi C."/>
            <person name="Bartlett D.H."/>
            <person name="Valle G."/>
        </authorList>
    </citation>
    <scope>NUCLEOTIDE SEQUENCE [LARGE SCALE GENOMIC DNA]</scope>
    <source>
        <strain>ATCC BAA-1253 / SS9</strain>
    </source>
</reference>
<gene>
    <name evidence="1" type="primary">smrB</name>
    <name type="ordered locus">PBPRA0966</name>
</gene>
<organism>
    <name type="scientific">Photobacterium profundum (strain SS9)</name>
    <dbReference type="NCBI Taxonomy" id="298386"/>
    <lineage>
        <taxon>Bacteria</taxon>
        <taxon>Pseudomonadati</taxon>
        <taxon>Pseudomonadota</taxon>
        <taxon>Gammaproteobacteria</taxon>
        <taxon>Vibrionales</taxon>
        <taxon>Vibrionaceae</taxon>
        <taxon>Photobacterium</taxon>
    </lineage>
</organism>
<protein>
    <recommendedName>
        <fullName evidence="1">Ribosome rescue factor SmrB</fullName>
        <ecNumber evidence="1">3.1.-.-</ecNumber>
    </recommendedName>
</protein>
<name>SMRB_PHOPR</name>
<comment type="function">
    <text evidence="1">Acts as a ribosome collision sensor. Detects stalled/collided disomes (pairs of ribosomes where the leading ribosome is stalled and a second ribosome has collided with it) and endonucleolytically cleaves mRNA at the 5' boundary of the stalled ribosome. Stalled/collided disomes form a new interface (primarily via the 30S subunits) that binds SmrB. Cleaved mRNA becomes available for tmRNA ligation, leading to ribosomal subunit dissociation and rescue of stalled ribosomes.</text>
</comment>
<comment type="subunit">
    <text evidence="1">Associates with collided ribosomes, but not with correctly translating polysomes.</text>
</comment>
<comment type="similarity">
    <text evidence="1">Belongs to the SmrB family.</text>
</comment>
<keyword id="KW-0255">Endonuclease</keyword>
<keyword id="KW-0378">Hydrolase</keyword>
<keyword id="KW-0540">Nuclease</keyword>
<keyword id="KW-1185">Reference proteome</keyword>
<keyword id="KW-0694">RNA-binding</keyword>
<keyword id="KW-0699">rRNA-binding</keyword>
<accession>P62430</accession>